<keyword id="KW-0002">3D-structure</keyword>
<keyword id="KW-0007">Acetylation</keyword>
<keyword id="KW-0963">Cytoplasm</keyword>
<keyword id="KW-1017">Isopeptide bond</keyword>
<keyword id="KW-0539">Nucleus</keyword>
<keyword id="KW-0597">Phosphoprotein</keyword>
<keyword id="KW-1185">Reference proteome</keyword>
<keyword id="KW-0677">Repeat</keyword>
<keyword id="KW-0687">Ribonucleoprotein</keyword>
<keyword id="KW-0832">Ubl conjugation</keyword>
<accession>Q9EQK5</accession>
<accession>Q922X6</accession>
<name>MVP_MOUSE</name>
<protein>
    <recommendedName>
        <fullName>Major vault protein</fullName>
        <shortName>MVP</shortName>
    </recommendedName>
</protein>
<sequence length="861" mass="95924">MATEEAIIRIPPYHYIHVLDQNSNVSRVEVGPKTYIRQDNERVLFAPVRMVTVPPRHYCIVANPVSRDAQSSVLFDVTGQVRLRHADQEIRLAQDPFPLYPGELLEKDITPLQVVLPNTALHLKALLDFEDKNGDKVMAGDEWLFEGPGTYIPQKEVEVVEIIQATVIKQNQALRLRARKECFDRDGKERVTGEEWLVRSVGAYLPAVFEEVLDLVDAVILTEKTALHLRARQNFKDLRGVAHRTGEEWLVTVQDTEAHVPDVYEEVLGVVPITTLGPRHYCVILDPMGPDGKNQLGQKRVVKGEKSFFLQPGERLERGIQDVYVLSEQQGLLLKALQPLEEGEGEEKVAHQAGDRWLIRGPLEYVPSAKVEVVEERQAIPLDQNEGIYVQDVKTGKVRAVIGSTYMLTQDEVLWEKELPSGVEELLNLGHDPLADRGQKGTAKVLQPSAARNKTRVVSYRVPHNAAVQVYDYRAKRARVVFGPELVSLDPEEQFTVLSLSAGRPKRPHARRALCLLLGPDFFTDVITIETADHARLQLQLAYNWHFELKNRNDPEETAKLFSVPDFVGDACKAIASRVRGAVASVTFDDFHKNSARIIRMAVFGFEMSEDAGPDGALLPRARDRAVFPQNGLVVSSVDVQSVEPVDQRTRDALQRSVQLAIEITTNSQEAAAKHEAQRLEQEARGRLERQKILDQSEAEKARKELLELEAMSMAVESTGNAKAEAESRAEAARIEGEGSVLQAKLKAQALAIETEAELERVKKVREMELIYSRAQLELEVSKAQQLADVEAKKFKEMTEALGPGTIRDLAVAGPEMQVKLLQSLGLKSTLITDGSSPINLFNTAFGLLGLGSDGQPPVQK</sequence>
<gene>
    <name type="primary">Mvp</name>
</gene>
<organism>
    <name type="scientific">Mus musculus</name>
    <name type="common">Mouse</name>
    <dbReference type="NCBI Taxonomy" id="10090"/>
    <lineage>
        <taxon>Eukaryota</taxon>
        <taxon>Metazoa</taxon>
        <taxon>Chordata</taxon>
        <taxon>Craniata</taxon>
        <taxon>Vertebrata</taxon>
        <taxon>Euteleostomi</taxon>
        <taxon>Mammalia</taxon>
        <taxon>Eutheria</taxon>
        <taxon>Euarchontoglires</taxon>
        <taxon>Glires</taxon>
        <taxon>Rodentia</taxon>
        <taxon>Myomorpha</taxon>
        <taxon>Muroidea</taxon>
        <taxon>Muridae</taxon>
        <taxon>Murinae</taxon>
        <taxon>Mus</taxon>
        <taxon>Mus</taxon>
    </lineage>
</organism>
<evidence type="ECO:0000250" key="1"/>
<evidence type="ECO:0000250" key="2">
    <source>
        <dbReference type="UniProtKB" id="Q14764"/>
    </source>
</evidence>
<evidence type="ECO:0000250" key="3">
    <source>
        <dbReference type="UniProtKB" id="Q62667"/>
    </source>
</evidence>
<evidence type="ECO:0000269" key="4">
    <source>
    </source>
</evidence>
<evidence type="ECO:0000305" key="5"/>
<evidence type="ECO:0007829" key="6">
    <source>
        <dbReference type="PDB" id="3GF5"/>
    </source>
</evidence>
<evidence type="ECO:0007829" key="7">
    <source>
        <dbReference type="PDB" id="3GNF"/>
    </source>
</evidence>
<evidence type="ECO:0007829" key="8">
    <source>
        <dbReference type="PDB" id="3GNG"/>
    </source>
</evidence>
<comment type="function">
    <text evidence="1">Required for normal vault structure. Vaults are multi-subunit structures that may act as scaffolds for proteins involved in signal transduction. Vaults may also play a role in nucleo-cytoplasmic transport. Down-regulates IFNG-mediated STAT1 signaling and subsequent activation of JAK. Down-regulates SRC activity and signaling through MAP kinases (By similarity).</text>
</comment>
<comment type="subunit">
    <text evidence="1 4">The vault ribonucleoprotein particle is a huge (400 A x 670 A) cage structure of 12.9 MDa. It consists of a dimer of half-vaults, with each half-vault comprising 39 identical major vault protein (MVP) chains, PARP4 and one or more vault RNAs (vRNAs). Interacts with PTEN and activated MAPK1. The phosphorylated protein interacts with the SH2 domains of PTPN11 and SRC. Interacts with APEX1 (By similarity). May interact with ZNF540 (By similarity). Interacts with TEP1.</text>
</comment>
<comment type="subcellular location">
    <subcellularLocation>
        <location evidence="2">Cytoplasm</location>
    </subcellularLocation>
    <subcellularLocation>
        <location evidence="2">Nucleus</location>
    </subcellularLocation>
</comment>
<comment type="domain">
    <text evidence="1">MVP 3 mediates interaction with PTEN.</text>
</comment>
<comment type="domain">
    <text evidence="1">MVP 4 mediates interaction with PARP4.</text>
</comment>
<comment type="PTM">
    <text evidence="1">Phosphorylated on Tyr residues after EGF stimulation.</text>
</comment>
<comment type="PTM">
    <text evidence="1">Dephosphorylated by PTPN11.</text>
</comment>
<feature type="initiator methionine" description="Removed" evidence="2">
    <location>
        <position position="1"/>
    </location>
</feature>
<feature type="chain" id="PRO_0000158981" description="Major vault protein">
    <location>
        <begin position="2"/>
        <end position="861"/>
    </location>
</feature>
<feature type="repeat" description="MVP 1">
    <location>
        <begin position="2"/>
        <end position="56"/>
    </location>
</feature>
<feature type="repeat" description="MVP 2">
    <location>
        <begin position="57"/>
        <end position="111"/>
    </location>
</feature>
<feature type="repeat" description="MVP 3">
    <location>
        <begin position="112"/>
        <end position="164"/>
    </location>
</feature>
<feature type="repeat" description="MVP 4">
    <location>
        <begin position="165"/>
        <end position="217"/>
    </location>
</feature>
<feature type="repeat" description="MVP 5">
    <location>
        <begin position="218"/>
        <end position="272"/>
    </location>
</feature>
<feature type="repeat" description="MVP 6">
    <location>
        <begin position="273"/>
        <end position="323"/>
    </location>
</feature>
<feature type="repeat" description="MVP 7">
    <location>
        <begin position="324"/>
        <end position="379"/>
    </location>
</feature>
<feature type="repeat" description="MVP 8">
    <location>
        <begin position="380"/>
        <end position="457"/>
    </location>
</feature>
<feature type="repeat" description="MVP 9">
    <location>
        <begin position="458"/>
        <end position="520"/>
    </location>
</feature>
<feature type="modified residue" description="N-acetylalanine" evidence="2">
    <location>
        <position position="2"/>
    </location>
</feature>
<feature type="modified residue" description="Phosphoserine" evidence="3">
    <location>
        <position position="421"/>
    </location>
</feature>
<feature type="cross-link" description="Glycyl lysine isopeptide (Lys-Gly) (interchain with G-Cter in SUMO2)" evidence="2">
    <location>
        <position position="444"/>
    </location>
</feature>
<feature type="cross-link" description="Glycyl lysine isopeptide (Lys-Gly) (interchain with G-Cter in SUMO2)" evidence="2">
    <location>
        <position position="704"/>
    </location>
</feature>
<feature type="sequence conflict" description="In Ref. 1; AAG43520." evidence="5" ref="1">
    <original>K</original>
    <variation>R</variation>
    <location>
        <position position="348"/>
    </location>
</feature>
<feature type="strand" evidence="7">
    <location>
        <begin position="7"/>
        <end position="10"/>
    </location>
</feature>
<feature type="strand" evidence="7">
    <location>
        <begin position="14"/>
        <end position="20"/>
    </location>
</feature>
<feature type="turn" evidence="7">
    <location>
        <begin position="21"/>
        <end position="23"/>
    </location>
</feature>
<feature type="strand" evidence="7">
    <location>
        <begin position="26"/>
        <end position="36"/>
    </location>
</feature>
<feature type="strand" evidence="7">
    <location>
        <begin position="41"/>
        <end position="43"/>
    </location>
</feature>
<feature type="strand" evidence="7">
    <location>
        <begin position="51"/>
        <end position="53"/>
    </location>
</feature>
<feature type="strand" evidence="7">
    <location>
        <begin position="57"/>
        <end position="63"/>
    </location>
</feature>
<feature type="strand" evidence="7">
    <location>
        <begin position="77"/>
        <end position="79"/>
    </location>
</feature>
<feature type="strand" evidence="7">
    <location>
        <begin position="88"/>
        <end position="91"/>
    </location>
</feature>
<feature type="strand" evidence="7">
    <location>
        <begin position="93"/>
        <end position="97"/>
    </location>
</feature>
<feature type="strand" evidence="7">
    <location>
        <begin position="104"/>
        <end position="111"/>
    </location>
</feature>
<feature type="strand" evidence="7">
    <location>
        <begin position="113"/>
        <end position="115"/>
    </location>
</feature>
<feature type="strand" evidence="7">
    <location>
        <begin position="119"/>
        <end position="127"/>
    </location>
</feature>
<feature type="strand" evidence="8">
    <location>
        <begin position="132"/>
        <end position="134"/>
    </location>
</feature>
<feature type="strand" evidence="7">
    <location>
        <begin position="142"/>
        <end position="151"/>
    </location>
</feature>
<feature type="strand" evidence="7">
    <location>
        <begin position="157"/>
        <end position="164"/>
    </location>
</feature>
<feature type="strand" evidence="7">
    <location>
        <begin position="166"/>
        <end position="168"/>
    </location>
</feature>
<feature type="strand" evidence="7">
    <location>
        <begin position="172"/>
        <end position="183"/>
    </location>
</feature>
<feature type="strand" evidence="6">
    <location>
        <begin position="185"/>
        <end position="187"/>
    </location>
</feature>
<feature type="strand" evidence="7">
    <location>
        <begin position="195"/>
        <end position="198"/>
    </location>
</feature>
<feature type="strand" evidence="7">
    <location>
        <begin position="202"/>
        <end position="204"/>
    </location>
</feature>
<feature type="strand" evidence="7">
    <location>
        <begin position="210"/>
        <end position="217"/>
    </location>
</feature>
<feature type="strand" evidence="7">
    <location>
        <begin position="225"/>
        <end position="233"/>
    </location>
</feature>
<feature type="strand" evidence="8">
    <location>
        <begin position="238"/>
        <end position="240"/>
    </location>
</feature>
<feature type="strand" evidence="7">
    <location>
        <begin position="248"/>
        <end position="251"/>
    </location>
</feature>
<feature type="turn" evidence="7">
    <location>
        <begin position="253"/>
        <end position="255"/>
    </location>
</feature>
<feature type="strand" evidence="7">
    <location>
        <begin position="257"/>
        <end position="259"/>
    </location>
</feature>
<feature type="strand" evidence="7">
    <location>
        <begin position="265"/>
        <end position="272"/>
    </location>
</feature>
<feature type="strand" evidence="7">
    <location>
        <begin position="274"/>
        <end position="276"/>
    </location>
</feature>
<feature type="strand" evidence="7">
    <location>
        <begin position="280"/>
        <end position="286"/>
    </location>
</feature>
<feature type="strand" evidence="6">
    <location>
        <begin position="290"/>
        <end position="292"/>
    </location>
</feature>
<feature type="strand" evidence="7">
    <location>
        <begin position="299"/>
        <end position="308"/>
    </location>
</feature>
<feature type="strand" evidence="7">
    <location>
        <begin position="315"/>
        <end position="322"/>
    </location>
</feature>
<feature type="strand" evidence="7">
    <location>
        <begin position="324"/>
        <end position="326"/>
    </location>
</feature>
<feature type="strand" evidence="7">
    <location>
        <begin position="331"/>
        <end position="336"/>
    </location>
</feature>
<feature type="strand" evidence="7">
    <location>
        <begin position="356"/>
        <end position="359"/>
    </location>
</feature>
<feature type="strand" evidence="7">
    <location>
        <begin position="361"/>
        <end position="365"/>
    </location>
</feature>
<feature type="strand" evidence="7">
    <location>
        <begin position="369"/>
        <end position="377"/>
    </location>
</feature>
<proteinExistence type="evidence at protein level"/>
<dbReference type="EMBL" id="AF210456">
    <property type="protein sequence ID" value="AAG43520.1"/>
    <property type="molecule type" value="mRNA"/>
</dbReference>
<dbReference type="EMBL" id="AY046318">
    <property type="protein sequence ID" value="AAL02325.1"/>
    <property type="molecule type" value="Genomic_DNA"/>
</dbReference>
<dbReference type="EMBL" id="CH466531">
    <property type="protein sequence ID" value="EDL17488.1"/>
    <property type="molecule type" value="Genomic_DNA"/>
</dbReference>
<dbReference type="EMBL" id="CH466531">
    <property type="protein sequence ID" value="EDL17489.1"/>
    <property type="molecule type" value="Genomic_DNA"/>
</dbReference>
<dbReference type="EMBL" id="BC006709">
    <property type="protein sequence ID" value="AAH06709.1"/>
    <property type="molecule type" value="mRNA"/>
</dbReference>
<dbReference type="CCDS" id="CCDS40136.2"/>
<dbReference type="RefSeq" id="NP_542369.3">
    <property type="nucleotide sequence ID" value="NM_080638.4"/>
</dbReference>
<dbReference type="RefSeq" id="XP_011240254.1">
    <property type="nucleotide sequence ID" value="XM_011241952.3"/>
</dbReference>
<dbReference type="PDB" id="3GF5">
    <property type="method" value="X-ray"/>
    <property type="resolution" value="2.50 A"/>
    <property type="chains" value="A/B=1-383"/>
</dbReference>
<dbReference type="PDB" id="3GNF">
    <property type="method" value="X-ray"/>
    <property type="resolution" value="2.10 A"/>
    <property type="chains" value="B=1-383"/>
</dbReference>
<dbReference type="PDB" id="3GNG">
    <property type="method" value="X-ray"/>
    <property type="resolution" value="3.00 A"/>
    <property type="chains" value="A=1-383"/>
</dbReference>
<dbReference type="PDBsum" id="3GF5"/>
<dbReference type="PDBsum" id="3GNF"/>
<dbReference type="PDBsum" id="3GNG"/>
<dbReference type="SMR" id="Q9EQK5"/>
<dbReference type="FunCoup" id="Q9EQK5">
    <property type="interactions" value="615"/>
</dbReference>
<dbReference type="STRING" id="10090.ENSMUSP00000127250"/>
<dbReference type="GlyGen" id="Q9EQK5">
    <property type="glycosylation" value="2 sites, 1 N-linked glycan (1 site), 1 O-linked glycan (1 site)"/>
</dbReference>
<dbReference type="iPTMnet" id="Q9EQK5"/>
<dbReference type="PhosphoSitePlus" id="Q9EQK5"/>
<dbReference type="SwissPalm" id="Q9EQK5"/>
<dbReference type="REPRODUCTION-2DPAGE" id="Q9EQK5"/>
<dbReference type="jPOST" id="Q9EQK5"/>
<dbReference type="PaxDb" id="10090-ENSMUSP00000127250"/>
<dbReference type="PeptideAtlas" id="Q9EQK5"/>
<dbReference type="ProteomicsDB" id="287334"/>
<dbReference type="Pumba" id="Q9EQK5"/>
<dbReference type="ABCD" id="Q9EQK5">
    <property type="antibodies" value="1 sequenced antibody"/>
</dbReference>
<dbReference type="DNASU" id="78388"/>
<dbReference type="Ensembl" id="ENSMUST00000133172.3">
    <property type="protein sequence ID" value="ENSMUSP00000119213.3"/>
    <property type="gene ID" value="ENSMUSG00000030681.19"/>
</dbReference>
<dbReference type="Ensembl" id="ENSMUST00000165096.10">
    <property type="protein sequence ID" value="ENSMUSP00000127250.4"/>
    <property type="gene ID" value="ENSMUSG00000030681.19"/>
</dbReference>
<dbReference type="GeneID" id="78388"/>
<dbReference type="KEGG" id="mmu:78388"/>
<dbReference type="AGR" id="MGI:1925638"/>
<dbReference type="CTD" id="9961"/>
<dbReference type="MGI" id="MGI:1925638">
    <property type="gene designation" value="Mvp"/>
</dbReference>
<dbReference type="eggNOG" id="ENOG502QPP0">
    <property type="taxonomic scope" value="Eukaryota"/>
</dbReference>
<dbReference type="GeneTree" id="ENSGT00390000008969"/>
<dbReference type="InParanoid" id="Q9EQK5"/>
<dbReference type="OrthoDB" id="6125719at2759"/>
<dbReference type="Reactome" id="R-MMU-6798695">
    <property type="pathway name" value="Neutrophil degranulation"/>
</dbReference>
<dbReference type="BioGRID-ORCS" id="78388">
    <property type="hits" value="1 hit in 78 CRISPR screens"/>
</dbReference>
<dbReference type="ChiTaRS" id="Mvp">
    <property type="organism name" value="mouse"/>
</dbReference>
<dbReference type="EvolutionaryTrace" id="Q9EQK5"/>
<dbReference type="PRO" id="PR:Q9EQK5"/>
<dbReference type="Proteomes" id="UP000000589">
    <property type="component" value="Chromosome 7"/>
</dbReference>
<dbReference type="RNAct" id="Q9EQK5">
    <property type="molecule type" value="protein"/>
</dbReference>
<dbReference type="GO" id="GO:0005856">
    <property type="term" value="C:cytoskeleton"/>
    <property type="evidence" value="ECO:0007669"/>
    <property type="project" value="Ensembl"/>
</dbReference>
<dbReference type="GO" id="GO:0005829">
    <property type="term" value="C:cytosol"/>
    <property type="evidence" value="ECO:0007669"/>
    <property type="project" value="Ensembl"/>
</dbReference>
<dbReference type="GO" id="GO:0005634">
    <property type="term" value="C:nucleus"/>
    <property type="evidence" value="ECO:0007669"/>
    <property type="project" value="UniProtKB-SubCell"/>
</dbReference>
<dbReference type="GO" id="GO:0048471">
    <property type="term" value="C:perinuclear region of cytoplasm"/>
    <property type="evidence" value="ECO:0007669"/>
    <property type="project" value="Ensembl"/>
</dbReference>
<dbReference type="GO" id="GO:1990904">
    <property type="term" value="C:ribonucleoprotein complex"/>
    <property type="evidence" value="ECO:0007669"/>
    <property type="project" value="UniProtKB-KW"/>
</dbReference>
<dbReference type="GO" id="GO:0042802">
    <property type="term" value="F:identical protein binding"/>
    <property type="evidence" value="ECO:0007669"/>
    <property type="project" value="Ensembl"/>
</dbReference>
<dbReference type="GO" id="GO:0019901">
    <property type="term" value="F:protein kinase binding"/>
    <property type="evidence" value="ECO:0007669"/>
    <property type="project" value="Ensembl"/>
</dbReference>
<dbReference type="GO" id="GO:0019903">
    <property type="term" value="F:protein phosphatase binding"/>
    <property type="evidence" value="ECO:0007669"/>
    <property type="project" value="Ensembl"/>
</dbReference>
<dbReference type="GO" id="GO:0008283">
    <property type="term" value="P:cell population proliferation"/>
    <property type="evidence" value="ECO:0000315"/>
    <property type="project" value="UniProtKB"/>
</dbReference>
<dbReference type="GO" id="GO:0038127">
    <property type="term" value="P:ERBB signaling pathway"/>
    <property type="evidence" value="ECO:0007669"/>
    <property type="project" value="Ensembl"/>
</dbReference>
<dbReference type="GO" id="GO:0042059">
    <property type="term" value="P:negative regulation of epidermal growth factor receptor signaling pathway"/>
    <property type="evidence" value="ECO:0007669"/>
    <property type="project" value="Ensembl"/>
</dbReference>
<dbReference type="GO" id="GO:0072376">
    <property type="term" value="P:protein activation cascade"/>
    <property type="evidence" value="ECO:0000315"/>
    <property type="project" value="UniProtKB"/>
</dbReference>
<dbReference type="CDD" id="cd08825">
    <property type="entry name" value="MVP_shoulder"/>
    <property type="match status" value="1"/>
</dbReference>
<dbReference type="FunFam" id="2.30.30.550:FF:000002">
    <property type="entry name" value="Major vault protein"/>
    <property type="match status" value="1"/>
</dbReference>
<dbReference type="FunFam" id="2.30.30.560:FF:000002">
    <property type="entry name" value="Major vault protein-alpha"/>
    <property type="match status" value="1"/>
</dbReference>
<dbReference type="FunFam" id="2.30.30.570:FF:000002">
    <property type="entry name" value="Major vault protein-alpha"/>
    <property type="match status" value="1"/>
</dbReference>
<dbReference type="FunFam" id="2.30.30.550:FF:000001">
    <property type="entry name" value="major vault protein-like"/>
    <property type="match status" value="3"/>
</dbReference>
<dbReference type="FunFam" id="2.30.30.560:FF:000001">
    <property type="entry name" value="major vault protein-like"/>
    <property type="match status" value="1"/>
</dbReference>
<dbReference type="FunFam" id="2.30.30.570:FF:000001">
    <property type="entry name" value="major vault protein-like"/>
    <property type="match status" value="1"/>
</dbReference>
<dbReference type="FunFam" id="2.30.30.620:FF:000001">
    <property type="entry name" value="major vault protein-like"/>
    <property type="match status" value="1"/>
</dbReference>
<dbReference type="FunFam" id="3.30.479.30:FF:000010">
    <property type="entry name" value="major vault protein-like"/>
    <property type="match status" value="1"/>
</dbReference>
<dbReference type="Gene3D" id="2.30.30.560">
    <property type="match status" value="2"/>
</dbReference>
<dbReference type="Gene3D" id="2.30.30.570">
    <property type="match status" value="2"/>
</dbReference>
<dbReference type="Gene3D" id="2.30.30.620">
    <property type="match status" value="1"/>
</dbReference>
<dbReference type="Gene3D" id="6.10.250.720">
    <property type="match status" value="1"/>
</dbReference>
<dbReference type="Gene3D" id="6.20.380.10">
    <property type="match status" value="1"/>
</dbReference>
<dbReference type="Gene3D" id="3.30.479.30">
    <property type="entry name" value="Band 7 domain"/>
    <property type="match status" value="1"/>
</dbReference>
<dbReference type="Gene3D" id="2.30.30.550">
    <property type="entry name" value="Major Vault Protein repeat"/>
    <property type="match status" value="4"/>
</dbReference>
<dbReference type="InterPro" id="IPR036013">
    <property type="entry name" value="Band_7/SPFH_dom_sf"/>
</dbReference>
<dbReference type="InterPro" id="IPR039059">
    <property type="entry name" value="MVP"/>
</dbReference>
<dbReference type="InterPro" id="IPR041139">
    <property type="entry name" value="MVP_rep_dom"/>
</dbReference>
<dbReference type="InterPro" id="IPR043023">
    <property type="entry name" value="MVP_rep_sf"/>
</dbReference>
<dbReference type="InterPro" id="IPR021870">
    <property type="entry name" value="MVP_shoulder"/>
</dbReference>
<dbReference type="InterPro" id="IPR041134">
    <property type="entry name" value="Vault_2"/>
</dbReference>
<dbReference type="InterPro" id="IPR043179">
    <property type="entry name" value="Vault_2_sf"/>
</dbReference>
<dbReference type="InterPro" id="IPR040989">
    <property type="entry name" value="Vault_3"/>
</dbReference>
<dbReference type="InterPro" id="IPR041136">
    <property type="entry name" value="Vault_4"/>
</dbReference>
<dbReference type="InterPro" id="IPR002499">
    <property type="entry name" value="Vault_N"/>
</dbReference>
<dbReference type="PANTHER" id="PTHR14165">
    <property type="entry name" value="MAJOR VAULT PROTEIN"/>
    <property type="match status" value="1"/>
</dbReference>
<dbReference type="PANTHER" id="PTHR14165:SF3">
    <property type="entry name" value="MAJOR VAULT PROTEIN"/>
    <property type="match status" value="1"/>
</dbReference>
<dbReference type="Pfam" id="PF11978">
    <property type="entry name" value="MVP_shoulder"/>
    <property type="match status" value="1"/>
</dbReference>
<dbReference type="Pfam" id="PF01505">
    <property type="entry name" value="Vault"/>
    <property type="match status" value="4"/>
</dbReference>
<dbReference type="Pfam" id="PF17794">
    <property type="entry name" value="Vault_2"/>
    <property type="match status" value="2"/>
</dbReference>
<dbReference type="Pfam" id="PF17795">
    <property type="entry name" value="Vault_3"/>
    <property type="match status" value="1"/>
</dbReference>
<dbReference type="Pfam" id="PF17796">
    <property type="entry name" value="Vault_4"/>
    <property type="match status" value="1"/>
</dbReference>
<dbReference type="PROSITE" id="PS51224">
    <property type="entry name" value="MVP"/>
    <property type="match status" value="8"/>
</dbReference>
<reference key="1">
    <citation type="submission" date="1999-12" db="EMBL/GenBank/DDBJ databases">
        <title>Isolation and characterization of the major vault protein and vault RNA from Mus musculus.</title>
        <authorList>
            <person name="Wiemer E.A.C."/>
            <person name="Mossink M.H."/>
            <person name="van Zon A."/>
            <person name="Schoester M."/>
            <person name="de Boevere M."/>
            <person name="Scheper R.J."/>
            <person name="Sonneveld P."/>
        </authorList>
    </citation>
    <scope>NUCLEOTIDE SEQUENCE [MRNA]</scope>
    <source>
        <strain>BALB/cJ</strain>
    </source>
</reference>
<reference key="2">
    <citation type="journal article" date="2009" name="PLoS Biol.">
        <title>Lineage-specific biology revealed by a finished genome assembly of the mouse.</title>
        <authorList>
            <person name="Church D.M."/>
            <person name="Goodstadt L."/>
            <person name="Hillier L.W."/>
            <person name="Zody M.C."/>
            <person name="Goldstein S."/>
            <person name="She X."/>
            <person name="Bult C.J."/>
            <person name="Agarwala R."/>
            <person name="Cherry J.L."/>
            <person name="DiCuccio M."/>
            <person name="Hlavina W."/>
            <person name="Kapustin Y."/>
            <person name="Meric P."/>
            <person name="Maglott D."/>
            <person name="Birtle Z."/>
            <person name="Marques A.C."/>
            <person name="Graves T."/>
            <person name="Zhou S."/>
            <person name="Teague B."/>
            <person name="Potamousis K."/>
            <person name="Churas C."/>
            <person name="Place M."/>
            <person name="Herschleb J."/>
            <person name="Runnheim R."/>
            <person name="Forrest D."/>
            <person name="Amos-Landgraf J."/>
            <person name="Schwartz D.C."/>
            <person name="Cheng Z."/>
            <person name="Lindblad-Toh K."/>
            <person name="Eichler E.E."/>
            <person name="Ponting C.P."/>
        </authorList>
    </citation>
    <scope>NUCLEOTIDE SEQUENCE [LARGE SCALE GENOMIC DNA]</scope>
    <source>
        <strain>C57BL/6J</strain>
    </source>
</reference>
<reference key="3">
    <citation type="submission" date="2005-07" db="EMBL/GenBank/DDBJ databases">
        <authorList>
            <person name="Mural R.J."/>
            <person name="Adams M.D."/>
            <person name="Myers E.W."/>
            <person name="Smith H.O."/>
            <person name="Venter J.C."/>
        </authorList>
    </citation>
    <scope>NUCLEOTIDE SEQUENCE [LARGE SCALE GENOMIC DNA]</scope>
</reference>
<reference key="4">
    <citation type="journal article" date="2004" name="Genome Res.">
        <title>The status, quality, and expansion of the NIH full-length cDNA project: the Mammalian Gene Collection (MGC).</title>
        <authorList>
            <consortium name="The MGC Project Team"/>
        </authorList>
    </citation>
    <scope>NUCLEOTIDE SEQUENCE [LARGE SCALE MRNA]</scope>
    <source>
        <strain>FVB/N</strain>
        <tissue>Mammary tumor</tissue>
    </source>
</reference>
<reference key="5">
    <citation type="journal article" date="2001" name="J. Cell Biol.">
        <title>The telomerase/vault-associated protein TEP1 is required for vault RNA stability and its association with the vault particle.</title>
        <authorList>
            <person name="Kickhoefer V.A."/>
            <person name="Liu Y."/>
            <person name="Kong L.B."/>
            <person name="Snow B.E."/>
            <person name="Stewart P.L."/>
            <person name="Harrington L."/>
            <person name="Rome L.H."/>
        </authorList>
    </citation>
    <scope>ASSOCIATION WITH TEP1</scope>
</reference>
<reference key="6">
    <citation type="journal article" date="2010" name="Cell">
        <title>A tissue-specific atlas of mouse protein phosphorylation and expression.</title>
        <authorList>
            <person name="Huttlin E.L."/>
            <person name="Jedrychowski M.P."/>
            <person name="Elias J.E."/>
            <person name="Goswami T."/>
            <person name="Rad R."/>
            <person name="Beausoleil S.A."/>
            <person name="Villen J."/>
            <person name="Haas W."/>
            <person name="Sowa M.E."/>
            <person name="Gygi S.P."/>
        </authorList>
    </citation>
    <scope>IDENTIFICATION BY MASS SPECTROMETRY [LARGE SCALE ANALYSIS]</scope>
    <source>
        <tissue>Brown adipose tissue</tissue>
        <tissue>Heart</tissue>
        <tissue>Kidney</tissue>
        <tissue>Liver</tissue>
        <tissue>Lung</tissue>
        <tissue>Pancreas</tissue>
        <tissue>Spleen</tissue>
        <tissue>Testis</tissue>
    </source>
</reference>
<reference key="7">
    <citation type="journal article" date="2009" name="EMBO J.">
        <title>The mechanism of vault opening from the high resolution structure of the N-terminal repeats of MVP.</title>
        <authorList>
            <person name="Querol-Audi J."/>
            <person name="Casanas A."/>
            <person name="Uson I."/>
            <person name="Luque D."/>
            <person name="Caston J.R."/>
            <person name="Fita I."/>
            <person name="Verdaguer N."/>
        </authorList>
    </citation>
    <scope>X-RAY CRYSTALLOGRAPHY (2.1 ANGSTROMS) OF 1-383</scope>
    <scope>SUBUNIT</scope>
</reference>